<protein>
    <recommendedName>
        <fullName evidence="1">Probable transcriptional regulatory protein Mrad2831_3553</fullName>
    </recommendedName>
</protein>
<gene>
    <name type="ordered locus">Mrad2831_3553</name>
</gene>
<accession>B1LUU4</accession>
<feature type="chain" id="PRO_1000132213" description="Probable transcriptional regulatory protein Mrad2831_3553">
    <location>
        <begin position="1"/>
        <end position="248"/>
    </location>
</feature>
<name>Y3553_METRJ</name>
<comment type="subcellular location">
    <subcellularLocation>
        <location evidence="1">Cytoplasm</location>
    </subcellularLocation>
</comment>
<comment type="similarity">
    <text evidence="1">Belongs to the TACO1 family.</text>
</comment>
<proteinExistence type="inferred from homology"/>
<organism>
    <name type="scientific">Methylobacterium radiotolerans (strain ATCC 27329 / DSM 1819 / JCM 2831 / NBRC 15690 / NCIMB 10815 / 0-1)</name>
    <dbReference type="NCBI Taxonomy" id="426355"/>
    <lineage>
        <taxon>Bacteria</taxon>
        <taxon>Pseudomonadati</taxon>
        <taxon>Pseudomonadota</taxon>
        <taxon>Alphaproteobacteria</taxon>
        <taxon>Hyphomicrobiales</taxon>
        <taxon>Methylobacteriaceae</taxon>
        <taxon>Methylobacterium</taxon>
    </lineage>
</organism>
<keyword id="KW-0963">Cytoplasm</keyword>
<keyword id="KW-0238">DNA-binding</keyword>
<keyword id="KW-0804">Transcription</keyword>
<keyword id="KW-0805">Transcription regulation</keyword>
<sequence length="248" mass="26553">MAGHSQFKNIMHRKGRVDAVRSKVFGKLAREITVAAKLGTPDPAMNPRLRAAILAARAENMPKDNIERAIKKAAGADGENYEDIRYEGYGPGGAALIVEAQTDNRNRTASDVRSAFTKSGGSLAETGAVAFMFDRVGVIAYPASVADADTMLEAAIEAGADDVSSGEDGHEVICAQDSYGEVTKALEARFGEPARTGLIWKAQNTINVDDETGEKLIRLVEVIEDQDDVQHVYVNFALSDALVAKLQA</sequence>
<evidence type="ECO:0000255" key="1">
    <source>
        <dbReference type="HAMAP-Rule" id="MF_00693"/>
    </source>
</evidence>
<reference key="1">
    <citation type="submission" date="2008-03" db="EMBL/GenBank/DDBJ databases">
        <title>Complete sequence of chromosome of Methylobacterium radiotolerans JCM 2831.</title>
        <authorList>
            <consortium name="US DOE Joint Genome Institute"/>
            <person name="Copeland A."/>
            <person name="Lucas S."/>
            <person name="Lapidus A."/>
            <person name="Glavina del Rio T."/>
            <person name="Dalin E."/>
            <person name="Tice H."/>
            <person name="Bruce D."/>
            <person name="Goodwin L."/>
            <person name="Pitluck S."/>
            <person name="Kiss H."/>
            <person name="Brettin T."/>
            <person name="Detter J.C."/>
            <person name="Han C."/>
            <person name="Kuske C.R."/>
            <person name="Schmutz J."/>
            <person name="Larimer F."/>
            <person name="Land M."/>
            <person name="Hauser L."/>
            <person name="Kyrpides N."/>
            <person name="Mikhailova N."/>
            <person name="Marx C.J."/>
            <person name="Richardson P."/>
        </authorList>
    </citation>
    <scope>NUCLEOTIDE SEQUENCE [LARGE SCALE GENOMIC DNA]</scope>
    <source>
        <strain>ATCC 27329 / DSM 1819 / JCM 2831 / NBRC 15690 / NCIMB 10815 / 0-1</strain>
    </source>
</reference>
<dbReference type="EMBL" id="CP001001">
    <property type="protein sequence ID" value="ACB25530.1"/>
    <property type="molecule type" value="Genomic_DNA"/>
</dbReference>
<dbReference type="RefSeq" id="WP_012320491.1">
    <property type="nucleotide sequence ID" value="NC_010505.1"/>
</dbReference>
<dbReference type="SMR" id="B1LUU4"/>
<dbReference type="STRING" id="426355.Mrad2831_3553"/>
<dbReference type="GeneID" id="6139606"/>
<dbReference type="KEGG" id="mrd:Mrad2831_3553"/>
<dbReference type="eggNOG" id="COG0217">
    <property type="taxonomic scope" value="Bacteria"/>
</dbReference>
<dbReference type="HOGENOM" id="CLU_062974_2_2_5"/>
<dbReference type="OrthoDB" id="9781053at2"/>
<dbReference type="Proteomes" id="UP000006589">
    <property type="component" value="Chromosome"/>
</dbReference>
<dbReference type="GO" id="GO:0005829">
    <property type="term" value="C:cytosol"/>
    <property type="evidence" value="ECO:0007669"/>
    <property type="project" value="TreeGrafter"/>
</dbReference>
<dbReference type="GO" id="GO:0003677">
    <property type="term" value="F:DNA binding"/>
    <property type="evidence" value="ECO:0007669"/>
    <property type="project" value="UniProtKB-UniRule"/>
</dbReference>
<dbReference type="GO" id="GO:0006355">
    <property type="term" value="P:regulation of DNA-templated transcription"/>
    <property type="evidence" value="ECO:0007669"/>
    <property type="project" value="UniProtKB-UniRule"/>
</dbReference>
<dbReference type="FunFam" id="1.10.10.200:FF:000002">
    <property type="entry name" value="Probable transcriptional regulatory protein CLM62_37755"/>
    <property type="match status" value="1"/>
</dbReference>
<dbReference type="Gene3D" id="1.10.10.200">
    <property type="match status" value="1"/>
</dbReference>
<dbReference type="Gene3D" id="3.30.70.980">
    <property type="match status" value="2"/>
</dbReference>
<dbReference type="HAMAP" id="MF_00693">
    <property type="entry name" value="Transcrip_reg_TACO1"/>
    <property type="match status" value="1"/>
</dbReference>
<dbReference type="InterPro" id="IPR017856">
    <property type="entry name" value="Integrase-like_N"/>
</dbReference>
<dbReference type="InterPro" id="IPR048300">
    <property type="entry name" value="TACO1_YebC-like_2nd/3rd_dom"/>
</dbReference>
<dbReference type="InterPro" id="IPR049083">
    <property type="entry name" value="TACO1_YebC_N"/>
</dbReference>
<dbReference type="InterPro" id="IPR002876">
    <property type="entry name" value="Transcrip_reg_TACO1-like"/>
</dbReference>
<dbReference type="InterPro" id="IPR026564">
    <property type="entry name" value="Transcrip_reg_TACO1-like_dom3"/>
</dbReference>
<dbReference type="InterPro" id="IPR029072">
    <property type="entry name" value="YebC-like"/>
</dbReference>
<dbReference type="NCBIfam" id="NF001030">
    <property type="entry name" value="PRK00110.1"/>
    <property type="match status" value="1"/>
</dbReference>
<dbReference type="NCBIfam" id="NF009044">
    <property type="entry name" value="PRK12378.1"/>
    <property type="match status" value="1"/>
</dbReference>
<dbReference type="NCBIfam" id="TIGR01033">
    <property type="entry name" value="YebC/PmpR family DNA-binding transcriptional regulator"/>
    <property type="match status" value="1"/>
</dbReference>
<dbReference type="PANTHER" id="PTHR12532:SF6">
    <property type="entry name" value="TRANSCRIPTIONAL REGULATORY PROTEIN YEBC-RELATED"/>
    <property type="match status" value="1"/>
</dbReference>
<dbReference type="PANTHER" id="PTHR12532">
    <property type="entry name" value="TRANSLATIONAL ACTIVATOR OF CYTOCHROME C OXIDASE 1"/>
    <property type="match status" value="1"/>
</dbReference>
<dbReference type="Pfam" id="PF20772">
    <property type="entry name" value="TACO1_YebC_N"/>
    <property type="match status" value="1"/>
</dbReference>
<dbReference type="Pfam" id="PF01709">
    <property type="entry name" value="Transcrip_reg"/>
    <property type="match status" value="1"/>
</dbReference>
<dbReference type="SUPFAM" id="SSF75625">
    <property type="entry name" value="YebC-like"/>
    <property type="match status" value="1"/>
</dbReference>